<protein>
    <recommendedName>
        <fullName evidence="1">tRNA modification GTPase MnmE</fullName>
        <ecNumber evidence="1">3.6.-.-</ecNumber>
    </recommendedName>
</protein>
<name>MNME_FRATT</name>
<keyword id="KW-0963">Cytoplasm</keyword>
<keyword id="KW-0342">GTP-binding</keyword>
<keyword id="KW-0378">Hydrolase</keyword>
<keyword id="KW-0460">Magnesium</keyword>
<keyword id="KW-0479">Metal-binding</keyword>
<keyword id="KW-0547">Nucleotide-binding</keyword>
<keyword id="KW-0630">Potassium</keyword>
<keyword id="KW-1185">Reference proteome</keyword>
<keyword id="KW-0819">tRNA processing</keyword>
<gene>
    <name evidence="1" type="primary">mnmE</name>
    <name evidence="1" type="synonym">trmE</name>
    <name type="ordered locus">FTT_1283</name>
</gene>
<dbReference type="EC" id="3.6.-.-" evidence="1"/>
<dbReference type="EMBL" id="AJ749949">
    <property type="protein sequence ID" value="CAG45916.1"/>
    <property type="molecule type" value="Genomic_DNA"/>
</dbReference>
<dbReference type="RefSeq" id="WP_003021964.1">
    <property type="nucleotide sequence ID" value="NC_006570.2"/>
</dbReference>
<dbReference type="RefSeq" id="YP_170239.1">
    <property type="nucleotide sequence ID" value="NC_006570.2"/>
</dbReference>
<dbReference type="SMR" id="Q5NFF3"/>
<dbReference type="STRING" id="177416.FTT_1283"/>
<dbReference type="DNASU" id="3192196"/>
<dbReference type="EnsemblBacteria" id="CAG45916">
    <property type="protein sequence ID" value="CAG45916"/>
    <property type="gene ID" value="FTT_1283"/>
</dbReference>
<dbReference type="KEGG" id="ftu:FTT_1283"/>
<dbReference type="eggNOG" id="COG0486">
    <property type="taxonomic scope" value="Bacteria"/>
</dbReference>
<dbReference type="OrthoDB" id="9805918at2"/>
<dbReference type="Proteomes" id="UP000001174">
    <property type="component" value="Chromosome"/>
</dbReference>
<dbReference type="GO" id="GO:0005829">
    <property type="term" value="C:cytosol"/>
    <property type="evidence" value="ECO:0007669"/>
    <property type="project" value="TreeGrafter"/>
</dbReference>
<dbReference type="GO" id="GO:0005525">
    <property type="term" value="F:GTP binding"/>
    <property type="evidence" value="ECO:0007669"/>
    <property type="project" value="UniProtKB-UniRule"/>
</dbReference>
<dbReference type="GO" id="GO:0003924">
    <property type="term" value="F:GTPase activity"/>
    <property type="evidence" value="ECO:0007669"/>
    <property type="project" value="UniProtKB-UniRule"/>
</dbReference>
<dbReference type="GO" id="GO:0046872">
    <property type="term" value="F:metal ion binding"/>
    <property type="evidence" value="ECO:0007669"/>
    <property type="project" value="UniProtKB-KW"/>
</dbReference>
<dbReference type="GO" id="GO:0030488">
    <property type="term" value="P:tRNA methylation"/>
    <property type="evidence" value="ECO:0007669"/>
    <property type="project" value="TreeGrafter"/>
</dbReference>
<dbReference type="GO" id="GO:0002098">
    <property type="term" value="P:tRNA wobble uridine modification"/>
    <property type="evidence" value="ECO:0007669"/>
    <property type="project" value="TreeGrafter"/>
</dbReference>
<dbReference type="CDD" id="cd04164">
    <property type="entry name" value="trmE"/>
    <property type="match status" value="1"/>
</dbReference>
<dbReference type="CDD" id="cd14858">
    <property type="entry name" value="TrmE_N"/>
    <property type="match status" value="1"/>
</dbReference>
<dbReference type="Gene3D" id="3.40.50.300">
    <property type="entry name" value="P-loop containing nucleotide triphosphate hydrolases"/>
    <property type="match status" value="1"/>
</dbReference>
<dbReference type="Gene3D" id="3.30.1360.120">
    <property type="entry name" value="Probable tRNA modification gtpase trme, domain 1"/>
    <property type="match status" value="1"/>
</dbReference>
<dbReference type="Gene3D" id="1.20.120.430">
    <property type="entry name" value="tRNA modification GTPase MnmE domain 2"/>
    <property type="match status" value="1"/>
</dbReference>
<dbReference type="HAMAP" id="MF_00379">
    <property type="entry name" value="GTPase_MnmE"/>
    <property type="match status" value="1"/>
</dbReference>
<dbReference type="InterPro" id="IPR031168">
    <property type="entry name" value="G_TrmE"/>
</dbReference>
<dbReference type="InterPro" id="IPR006073">
    <property type="entry name" value="GTP-bd"/>
</dbReference>
<dbReference type="InterPro" id="IPR018948">
    <property type="entry name" value="GTP-bd_TrmE_N"/>
</dbReference>
<dbReference type="InterPro" id="IPR004520">
    <property type="entry name" value="GTPase_MnmE"/>
</dbReference>
<dbReference type="InterPro" id="IPR027368">
    <property type="entry name" value="MnmE_dom2"/>
</dbReference>
<dbReference type="InterPro" id="IPR025867">
    <property type="entry name" value="MnmE_helical"/>
</dbReference>
<dbReference type="InterPro" id="IPR027417">
    <property type="entry name" value="P-loop_NTPase"/>
</dbReference>
<dbReference type="InterPro" id="IPR005225">
    <property type="entry name" value="Small_GTP-bd"/>
</dbReference>
<dbReference type="InterPro" id="IPR027266">
    <property type="entry name" value="TrmE/GcvT_dom1"/>
</dbReference>
<dbReference type="NCBIfam" id="TIGR00450">
    <property type="entry name" value="mnmE_trmE_thdF"/>
    <property type="match status" value="1"/>
</dbReference>
<dbReference type="NCBIfam" id="NF003661">
    <property type="entry name" value="PRK05291.1-3"/>
    <property type="match status" value="1"/>
</dbReference>
<dbReference type="NCBIfam" id="TIGR00231">
    <property type="entry name" value="small_GTP"/>
    <property type="match status" value="1"/>
</dbReference>
<dbReference type="PANTHER" id="PTHR42714">
    <property type="entry name" value="TRNA MODIFICATION GTPASE GTPBP3"/>
    <property type="match status" value="1"/>
</dbReference>
<dbReference type="PANTHER" id="PTHR42714:SF2">
    <property type="entry name" value="TRNA MODIFICATION GTPASE GTPBP3, MITOCHONDRIAL"/>
    <property type="match status" value="1"/>
</dbReference>
<dbReference type="Pfam" id="PF01926">
    <property type="entry name" value="MMR_HSR1"/>
    <property type="match status" value="1"/>
</dbReference>
<dbReference type="Pfam" id="PF12631">
    <property type="entry name" value="MnmE_helical"/>
    <property type="match status" value="1"/>
</dbReference>
<dbReference type="Pfam" id="PF10396">
    <property type="entry name" value="TrmE_N"/>
    <property type="match status" value="1"/>
</dbReference>
<dbReference type="PRINTS" id="PR00326">
    <property type="entry name" value="GTP1OBG"/>
</dbReference>
<dbReference type="SUPFAM" id="SSF52540">
    <property type="entry name" value="P-loop containing nucleoside triphosphate hydrolases"/>
    <property type="match status" value="1"/>
</dbReference>
<dbReference type="SUPFAM" id="SSF116878">
    <property type="entry name" value="TrmE connector domain"/>
    <property type="match status" value="1"/>
</dbReference>
<dbReference type="PROSITE" id="PS51709">
    <property type="entry name" value="G_TRME"/>
    <property type="match status" value="1"/>
</dbReference>
<evidence type="ECO:0000255" key="1">
    <source>
        <dbReference type="HAMAP-Rule" id="MF_00379"/>
    </source>
</evidence>
<proteinExistence type="inferred from homology"/>
<reference key="1">
    <citation type="journal article" date="2005" name="Nat. Genet.">
        <title>The complete genome sequence of Francisella tularensis, the causative agent of tularemia.</title>
        <authorList>
            <person name="Larsson P."/>
            <person name="Oyston P.C.F."/>
            <person name="Chain P."/>
            <person name="Chu M.C."/>
            <person name="Duffield M."/>
            <person name="Fuxelius H.-H."/>
            <person name="Garcia E."/>
            <person name="Haelltorp G."/>
            <person name="Johansson D."/>
            <person name="Isherwood K.E."/>
            <person name="Karp P.D."/>
            <person name="Larsson E."/>
            <person name="Liu Y."/>
            <person name="Michell S."/>
            <person name="Prior J."/>
            <person name="Prior R."/>
            <person name="Malfatti S."/>
            <person name="Sjoestedt A."/>
            <person name="Svensson K."/>
            <person name="Thompson N."/>
            <person name="Vergez L."/>
            <person name="Wagg J.K."/>
            <person name="Wren B.W."/>
            <person name="Lindler L.E."/>
            <person name="Andersson S.G.E."/>
            <person name="Forsman M."/>
            <person name="Titball R.W."/>
        </authorList>
    </citation>
    <scope>NUCLEOTIDE SEQUENCE [LARGE SCALE GENOMIC DNA]</scope>
    <source>
        <strain>SCHU S4 / Schu 4</strain>
    </source>
</reference>
<feature type="chain" id="PRO_1000060045" description="tRNA modification GTPase MnmE">
    <location>
        <begin position="1"/>
        <end position="450"/>
    </location>
</feature>
<feature type="domain" description="TrmE-type G">
    <location>
        <begin position="214"/>
        <end position="374"/>
    </location>
</feature>
<feature type="binding site" evidence="1">
    <location>
        <position position="23"/>
    </location>
    <ligand>
        <name>(6S)-5-formyl-5,6,7,8-tetrahydrofolate</name>
        <dbReference type="ChEBI" id="CHEBI:57457"/>
    </ligand>
</feature>
<feature type="binding site" evidence="1">
    <location>
        <position position="79"/>
    </location>
    <ligand>
        <name>(6S)-5-formyl-5,6,7,8-tetrahydrofolate</name>
        <dbReference type="ChEBI" id="CHEBI:57457"/>
    </ligand>
</feature>
<feature type="binding site" evidence="1">
    <location>
        <position position="118"/>
    </location>
    <ligand>
        <name>(6S)-5-formyl-5,6,7,8-tetrahydrofolate</name>
        <dbReference type="ChEBI" id="CHEBI:57457"/>
    </ligand>
</feature>
<feature type="binding site" evidence="1">
    <location>
        <begin position="224"/>
        <end position="229"/>
    </location>
    <ligand>
        <name>GTP</name>
        <dbReference type="ChEBI" id="CHEBI:37565"/>
    </ligand>
</feature>
<feature type="binding site" evidence="1">
    <location>
        <position position="224"/>
    </location>
    <ligand>
        <name>K(+)</name>
        <dbReference type="ChEBI" id="CHEBI:29103"/>
    </ligand>
</feature>
<feature type="binding site" evidence="1">
    <location>
        <position position="228"/>
    </location>
    <ligand>
        <name>Mg(2+)</name>
        <dbReference type="ChEBI" id="CHEBI:18420"/>
    </ligand>
</feature>
<feature type="binding site" evidence="1">
    <location>
        <begin position="243"/>
        <end position="249"/>
    </location>
    <ligand>
        <name>GTP</name>
        <dbReference type="ChEBI" id="CHEBI:37565"/>
    </ligand>
</feature>
<feature type="binding site" evidence="1">
    <location>
        <position position="243"/>
    </location>
    <ligand>
        <name>K(+)</name>
        <dbReference type="ChEBI" id="CHEBI:29103"/>
    </ligand>
</feature>
<feature type="binding site" evidence="1">
    <location>
        <position position="245"/>
    </location>
    <ligand>
        <name>K(+)</name>
        <dbReference type="ChEBI" id="CHEBI:29103"/>
    </ligand>
</feature>
<feature type="binding site" evidence="1">
    <location>
        <position position="248"/>
    </location>
    <ligand>
        <name>K(+)</name>
        <dbReference type="ChEBI" id="CHEBI:29103"/>
    </ligand>
</feature>
<feature type="binding site" evidence="1">
    <location>
        <position position="249"/>
    </location>
    <ligand>
        <name>Mg(2+)</name>
        <dbReference type="ChEBI" id="CHEBI:18420"/>
    </ligand>
</feature>
<feature type="binding site" evidence="1">
    <location>
        <begin position="268"/>
        <end position="271"/>
    </location>
    <ligand>
        <name>GTP</name>
        <dbReference type="ChEBI" id="CHEBI:37565"/>
    </ligand>
</feature>
<feature type="binding site" evidence="1">
    <location>
        <position position="450"/>
    </location>
    <ligand>
        <name>(6S)-5-formyl-5,6,7,8-tetrahydrofolate</name>
        <dbReference type="ChEBI" id="CHEBI:57457"/>
    </ligand>
</feature>
<sequence length="450" mass="49782">MYTKDTIVAIATPQGNGGIGIIRISGIDALAIAEKLTKKQLKPRYATFCNVYNDNEIIDHGIIIFFKAPLSYTGEDVVEIQAHGNPFILNLIIKAALNCGARMAKAGEFTERAFLNNKLDLAQAEAVADIINASSEIAAKSAAKSLQGDFSKEINNLLEKLIYLRMYVEASIDFPEEEINFLEDQKIHSSLEEIYKVILAVKNSCKQGVILAEGITLILVGKPNAGKSSLLNALAGKESAIVTSIAGTTRDIVKEHIQINGVPMHIIDTAGLRNSDDIIESEGIKRAIKKIQEADQVLFVTDDYTNSQVKFSDIKEIIPEFYDQIPKDIDITYVHNKIDLLKEVPHNHANHIYISAENNIGIDKLKEHILNKVGYTNQNESIYTARERHVTAINNAFEHIKLAKEQLELGNGELLAEELLIVQEYLNSITGEFSSDDLLGEIFSSFCIGK</sequence>
<organism>
    <name type="scientific">Francisella tularensis subsp. tularensis (strain SCHU S4 / Schu 4)</name>
    <dbReference type="NCBI Taxonomy" id="177416"/>
    <lineage>
        <taxon>Bacteria</taxon>
        <taxon>Pseudomonadati</taxon>
        <taxon>Pseudomonadota</taxon>
        <taxon>Gammaproteobacteria</taxon>
        <taxon>Thiotrichales</taxon>
        <taxon>Francisellaceae</taxon>
        <taxon>Francisella</taxon>
    </lineage>
</organism>
<accession>Q5NFF3</accession>
<comment type="function">
    <text evidence="1">Exhibits a very high intrinsic GTPase hydrolysis rate. Involved in the addition of a carboxymethylaminomethyl (cmnm) group at the wobble position (U34) of certain tRNAs, forming tRNA-cmnm(5)s(2)U34.</text>
</comment>
<comment type="cofactor">
    <cofactor evidence="1">
        <name>K(+)</name>
        <dbReference type="ChEBI" id="CHEBI:29103"/>
    </cofactor>
    <text evidence="1">Binds 1 potassium ion per subunit.</text>
</comment>
<comment type="subunit">
    <text evidence="1">Homodimer. Heterotetramer of two MnmE and two MnmG subunits.</text>
</comment>
<comment type="subcellular location">
    <subcellularLocation>
        <location evidence="1">Cytoplasm</location>
    </subcellularLocation>
</comment>
<comment type="similarity">
    <text evidence="1">Belongs to the TRAFAC class TrmE-Era-EngA-EngB-Septin-like GTPase superfamily. TrmE GTPase family.</text>
</comment>